<name>RBFA_LACDB</name>
<feature type="chain" id="PRO_1000000126" description="Ribosome-binding factor A">
    <location>
        <begin position="1"/>
        <end position="120"/>
    </location>
</feature>
<sequence>MKHRKGRVEGEILRELTKIIRKNIRDPRVSNVTFTAVECSNDFSYATVYYSLLTEDEQAQKEAEAGLEKAKGTMRHLLGQSLTMYKVPELIFKRDQSVIYGSKIDRLLADLKKQEQDRQN</sequence>
<gene>
    <name evidence="1" type="primary">rbfA</name>
    <name type="ordered locus">LBUL_1240</name>
</gene>
<accession>Q049V6</accession>
<reference key="1">
    <citation type="journal article" date="2006" name="Proc. Natl. Acad. Sci. U.S.A.">
        <title>Comparative genomics of the lactic acid bacteria.</title>
        <authorList>
            <person name="Makarova K.S."/>
            <person name="Slesarev A."/>
            <person name="Wolf Y.I."/>
            <person name="Sorokin A."/>
            <person name="Mirkin B."/>
            <person name="Koonin E.V."/>
            <person name="Pavlov A."/>
            <person name="Pavlova N."/>
            <person name="Karamychev V."/>
            <person name="Polouchine N."/>
            <person name="Shakhova V."/>
            <person name="Grigoriev I."/>
            <person name="Lou Y."/>
            <person name="Rohksar D."/>
            <person name="Lucas S."/>
            <person name="Huang K."/>
            <person name="Goodstein D.M."/>
            <person name="Hawkins T."/>
            <person name="Plengvidhya V."/>
            <person name="Welker D."/>
            <person name="Hughes J."/>
            <person name="Goh Y."/>
            <person name="Benson A."/>
            <person name="Baldwin K."/>
            <person name="Lee J.-H."/>
            <person name="Diaz-Muniz I."/>
            <person name="Dosti B."/>
            <person name="Smeianov V."/>
            <person name="Wechter W."/>
            <person name="Barabote R."/>
            <person name="Lorca G."/>
            <person name="Altermann E."/>
            <person name="Barrangou R."/>
            <person name="Ganesan B."/>
            <person name="Xie Y."/>
            <person name="Rawsthorne H."/>
            <person name="Tamir D."/>
            <person name="Parker C."/>
            <person name="Breidt F."/>
            <person name="Broadbent J.R."/>
            <person name="Hutkins R."/>
            <person name="O'Sullivan D."/>
            <person name="Steele J."/>
            <person name="Unlu G."/>
            <person name="Saier M.H. Jr."/>
            <person name="Klaenhammer T."/>
            <person name="Richardson P."/>
            <person name="Kozyavkin S."/>
            <person name="Weimer B.C."/>
            <person name="Mills D.A."/>
        </authorList>
    </citation>
    <scope>NUCLEOTIDE SEQUENCE [LARGE SCALE GENOMIC DNA]</scope>
    <source>
        <strain>ATCC BAA-365 / Lb-18</strain>
    </source>
</reference>
<organism>
    <name type="scientific">Lactobacillus delbrueckii subsp. bulgaricus (strain ATCC BAA-365 / Lb-18)</name>
    <dbReference type="NCBI Taxonomy" id="321956"/>
    <lineage>
        <taxon>Bacteria</taxon>
        <taxon>Bacillati</taxon>
        <taxon>Bacillota</taxon>
        <taxon>Bacilli</taxon>
        <taxon>Lactobacillales</taxon>
        <taxon>Lactobacillaceae</taxon>
        <taxon>Lactobacillus</taxon>
    </lineage>
</organism>
<evidence type="ECO:0000255" key="1">
    <source>
        <dbReference type="HAMAP-Rule" id="MF_00003"/>
    </source>
</evidence>
<dbReference type="EMBL" id="CP000412">
    <property type="protein sequence ID" value="ABJ58766.1"/>
    <property type="molecule type" value="Genomic_DNA"/>
</dbReference>
<dbReference type="RefSeq" id="WP_002876717.1">
    <property type="nucleotide sequence ID" value="NC_008529.1"/>
</dbReference>
<dbReference type="SMR" id="Q049V6"/>
<dbReference type="GeneID" id="69669161"/>
<dbReference type="KEGG" id="lbu:LBUL_1240"/>
<dbReference type="HOGENOM" id="CLU_089475_3_0_9"/>
<dbReference type="BioCyc" id="LDEL321956:LBUL_RS05820-MONOMER"/>
<dbReference type="GO" id="GO:0005829">
    <property type="term" value="C:cytosol"/>
    <property type="evidence" value="ECO:0007669"/>
    <property type="project" value="TreeGrafter"/>
</dbReference>
<dbReference type="GO" id="GO:0043024">
    <property type="term" value="F:ribosomal small subunit binding"/>
    <property type="evidence" value="ECO:0007669"/>
    <property type="project" value="TreeGrafter"/>
</dbReference>
<dbReference type="GO" id="GO:0030490">
    <property type="term" value="P:maturation of SSU-rRNA"/>
    <property type="evidence" value="ECO:0007669"/>
    <property type="project" value="UniProtKB-UniRule"/>
</dbReference>
<dbReference type="Gene3D" id="3.30.300.20">
    <property type="match status" value="1"/>
</dbReference>
<dbReference type="HAMAP" id="MF_00003">
    <property type="entry name" value="RbfA"/>
    <property type="match status" value="1"/>
</dbReference>
<dbReference type="InterPro" id="IPR015946">
    <property type="entry name" value="KH_dom-like_a/b"/>
</dbReference>
<dbReference type="InterPro" id="IPR000238">
    <property type="entry name" value="RbfA"/>
</dbReference>
<dbReference type="InterPro" id="IPR023799">
    <property type="entry name" value="RbfA_dom_sf"/>
</dbReference>
<dbReference type="InterPro" id="IPR020053">
    <property type="entry name" value="Ribosome-bd_factorA_CS"/>
</dbReference>
<dbReference type="NCBIfam" id="NF010391">
    <property type="entry name" value="PRK13818.1"/>
    <property type="match status" value="1"/>
</dbReference>
<dbReference type="NCBIfam" id="TIGR00082">
    <property type="entry name" value="rbfA"/>
    <property type="match status" value="1"/>
</dbReference>
<dbReference type="PANTHER" id="PTHR33515">
    <property type="entry name" value="RIBOSOME-BINDING FACTOR A, CHLOROPLASTIC-RELATED"/>
    <property type="match status" value="1"/>
</dbReference>
<dbReference type="PANTHER" id="PTHR33515:SF1">
    <property type="entry name" value="RIBOSOME-BINDING FACTOR A, CHLOROPLASTIC-RELATED"/>
    <property type="match status" value="1"/>
</dbReference>
<dbReference type="Pfam" id="PF02033">
    <property type="entry name" value="RBFA"/>
    <property type="match status" value="1"/>
</dbReference>
<dbReference type="SUPFAM" id="SSF89919">
    <property type="entry name" value="Ribosome-binding factor A, RbfA"/>
    <property type="match status" value="1"/>
</dbReference>
<dbReference type="PROSITE" id="PS01319">
    <property type="entry name" value="RBFA"/>
    <property type="match status" value="1"/>
</dbReference>
<protein>
    <recommendedName>
        <fullName evidence="1">Ribosome-binding factor A</fullName>
    </recommendedName>
</protein>
<keyword id="KW-0963">Cytoplasm</keyword>
<keyword id="KW-0690">Ribosome biogenesis</keyword>
<comment type="function">
    <text evidence="1">One of several proteins that assist in the late maturation steps of the functional core of the 30S ribosomal subunit. Associates with free 30S ribosomal subunits (but not with 30S subunits that are part of 70S ribosomes or polysomes). Required for efficient processing of 16S rRNA. May interact with the 5'-terminal helix region of 16S rRNA.</text>
</comment>
<comment type="subunit">
    <text evidence="1">Monomer. Binds 30S ribosomal subunits, but not 50S ribosomal subunits or 70S ribosomes.</text>
</comment>
<comment type="subcellular location">
    <subcellularLocation>
        <location evidence="1">Cytoplasm</location>
    </subcellularLocation>
</comment>
<comment type="similarity">
    <text evidence="1">Belongs to the RbfA family.</text>
</comment>
<proteinExistence type="inferred from homology"/>